<evidence type="ECO:0000255" key="1">
    <source>
        <dbReference type="HAMAP-Rule" id="MF_01619"/>
    </source>
</evidence>
<keyword id="KW-0479">Metal-binding</keyword>
<keyword id="KW-0520">NAD</keyword>
<keyword id="KW-0560">Oxidoreductase</keyword>
<proteinExistence type="inferred from homology"/>
<reference key="1">
    <citation type="journal article" date="2011" name="J. Bacteriol.">
        <title>Comparative genomics of 28 Salmonella enterica isolates: evidence for CRISPR-mediated adaptive sublineage evolution.</title>
        <authorList>
            <person name="Fricke W.F."/>
            <person name="Mammel M.K."/>
            <person name="McDermott P.F."/>
            <person name="Tartera C."/>
            <person name="White D.G."/>
            <person name="Leclerc J.E."/>
            <person name="Ravel J."/>
            <person name="Cebula T.A."/>
        </authorList>
    </citation>
    <scope>NUCLEOTIDE SEQUENCE [LARGE SCALE GENOMIC DNA]</scope>
    <source>
        <strain>SL483</strain>
    </source>
</reference>
<feature type="chain" id="PRO_1000186003" description="NAD-dependent malic enzyme">
    <location>
        <begin position="1"/>
        <end position="565"/>
    </location>
</feature>
<feature type="active site" description="Proton donor" evidence="1">
    <location>
        <position position="104"/>
    </location>
</feature>
<feature type="active site" description="Proton acceptor" evidence="1">
    <location>
        <position position="175"/>
    </location>
</feature>
<feature type="binding site" evidence="1">
    <location>
        <position position="157"/>
    </location>
    <ligand>
        <name>NAD(+)</name>
        <dbReference type="ChEBI" id="CHEBI:57540"/>
    </ligand>
</feature>
<feature type="binding site" evidence="1">
    <location>
        <position position="246"/>
    </location>
    <ligand>
        <name>a divalent metal cation</name>
        <dbReference type="ChEBI" id="CHEBI:60240"/>
    </ligand>
</feature>
<feature type="binding site" evidence="1">
    <location>
        <position position="247"/>
    </location>
    <ligand>
        <name>a divalent metal cation</name>
        <dbReference type="ChEBI" id="CHEBI:60240"/>
    </ligand>
</feature>
<feature type="binding site" evidence="1">
    <location>
        <position position="270"/>
    </location>
    <ligand>
        <name>a divalent metal cation</name>
        <dbReference type="ChEBI" id="CHEBI:60240"/>
    </ligand>
</feature>
<feature type="binding site" evidence="1">
    <location>
        <position position="270"/>
    </location>
    <ligand>
        <name>NAD(+)</name>
        <dbReference type="ChEBI" id="CHEBI:57540"/>
    </ligand>
</feature>
<feature type="binding site" evidence="1">
    <location>
        <position position="418"/>
    </location>
    <ligand>
        <name>NAD(+)</name>
        <dbReference type="ChEBI" id="CHEBI:57540"/>
    </ligand>
</feature>
<feature type="site" description="Important for activity" evidence="1">
    <location>
        <position position="270"/>
    </location>
</feature>
<protein>
    <recommendedName>
        <fullName evidence="1">NAD-dependent malic enzyme</fullName>
        <shortName evidence="1">NAD-ME</shortName>
        <ecNumber evidence="1">1.1.1.38</ecNumber>
    </recommendedName>
</protein>
<accession>B5F5W5</accession>
<comment type="catalytic activity">
    <reaction evidence="1">
        <text>(S)-malate + NAD(+) = pyruvate + CO2 + NADH</text>
        <dbReference type="Rhea" id="RHEA:12653"/>
        <dbReference type="ChEBI" id="CHEBI:15361"/>
        <dbReference type="ChEBI" id="CHEBI:15589"/>
        <dbReference type="ChEBI" id="CHEBI:16526"/>
        <dbReference type="ChEBI" id="CHEBI:57540"/>
        <dbReference type="ChEBI" id="CHEBI:57945"/>
        <dbReference type="EC" id="1.1.1.38"/>
    </reaction>
</comment>
<comment type="catalytic activity">
    <reaction evidence="1">
        <text>oxaloacetate + H(+) = pyruvate + CO2</text>
        <dbReference type="Rhea" id="RHEA:15641"/>
        <dbReference type="ChEBI" id="CHEBI:15361"/>
        <dbReference type="ChEBI" id="CHEBI:15378"/>
        <dbReference type="ChEBI" id="CHEBI:16452"/>
        <dbReference type="ChEBI" id="CHEBI:16526"/>
        <dbReference type="EC" id="1.1.1.38"/>
    </reaction>
</comment>
<comment type="cofactor">
    <cofactor evidence="1">
        <name>Mg(2+)</name>
        <dbReference type="ChEBI" id="CHEBI:18420"/>
    </cofactor>
    <cofactor evidence="1">
        <name>Mn(2+)</name>
        <dbReference type="ChEBI" id="CHEBI:29035"/>
    </cofactor>
    <text evidence="1">Divalent metal cations. Prefers magnesium or manganese.</text>
</comment>
<comment type="subunit">
    <text evidence="1">Homotetramer.</text>
</comment>
<comment type="similarity">
    <text evidence="1">Belongs to the malic enzymes family.</text>
</comment>
<name>MAO1_SALA4</name>
<sequence>METTTKKARSLYIPYAGPVLLEFPLLNKGSAFSVEERRNFNLSGLLPEVVESIEEQAERAWLQYQGFKTEIDKHIYLRNIQDTNETLFYRLVQNHLEEMMPVIYTPTVGAACERFSEIYRRARGVFISYPNRHNMDDILQNVPNHNIKVIVVTDGERILGLGDQGIGGMGIPIGKLSLYTACGGISPAYTLPVVLDVGTNNQQLLNDPLYMGWRHPRITDNEYYAFVDEFIQAVKQRWPDILLQFEDFAQKNAMPLLTRYRDEICSFNDDIQGTAAVTVGTLIAASRAAGSQLSEQKIVFLGAGSAGCGIAEQIIAQTQREGLSEDAARQNVFMVDRFGLLTDRMPNLLPFQAKLVQKCDNLQHWDTENDVLSLLDVVRNVKPDILIGVSGQTGLFTEEIIREMHKHCPRPIVMPLSNPTSRVEATPQDIIAWTEGNALVATGSPFSPVIWKDKVYPIAQCNNAYIFPGIGLGVIASGASRITDEMLMSASETLAKHSPLVNNGEGLVLPALKDIQVVSRAIAFAVGKMAQQQGVAVKTSAEALQQAIDDNFWKPEYRDYRRTSI</sequence>
<organism>
    <name type="scientific">Salmonella agona (strain SL483)</name>
    <dbReference type="NCBI Taxonomy" id="454166"/>
    <lineage>
        <taxon>Bacteria</taxon>
        <taxon>Pseudomonadati</taxon>
        <taxon>Pseudomonadota</taxon>
        <taxon>Gammaproteobacteria</taxon>
        <taxon>Enterobacterales</taxon>
        <taxon>Enterobacteriaceae</taxon>
        <taxon>Salmonella</taxon>
    </lineage>
</organism>
<gene>
    <name evidence="1" type="primary">maeA</name>
    <name type="ordered locus">SeAg_B1599</name>
</gene>
<dbReference type="EC" id="1.1.1.38" evidence="1"/>
<dbReference type="EMBL" id="CP001138">
    <property type="protein sequence ID" value="ACH52755.1"/>
    <property type="molecule type" value="Genomic_DNA"/>
</dbReference>
<dbReference type="RefSeq" id="WP_000450515.1">
    <property type="nucleotide sequence ID" value="NC_011149.1"/>
</dbReference>
<dbReference type="SMR" id="B5F5W5"/>
<dbReference type="KEGG" id="sea:SeAg_B1599"/>
<dbReference type="HOGENOM" id="CLU_011405_5_2_6"/>
<dbReference type="Proteomes" id="UP000008819">
    <property type="component" value="Chromosome"/>
</dbReference>
<dbReference type="GO" id="GO:0005829">
    <property type="term" value="C:cytosol"/>
    <property type="evidence" value="ECO:0007669"/>
    <property type="project" value="TreeGrafter"/>
</dbReference>
<dbReference type="GO" id="GO:0004471">
    <property type="term" value="F:malate dehydrogenase (decarboxylating) (NAD+) activity"/>
    <property type="evidence" value="ECO:0007669"/>
    <property type="project" value="UniProtKB-UniRule"/>
</dbReference>
<dbReference type="GO" id="GO:0046872">
    <property type="term" value="F:metal ion binding"/>
    <property type="evidence" value="ECO:0007669"/>
    <property type="project" value="UniProtKB-KW"/>
</dbReference>
<dbReference type="GO" id="GO:0051287">
    <property type="term" value="F:NAD binding"/>
    <property type="evidence" value="ECO:0007669"/>
    <property type="project" value="InterPro"/>
</dbReference>
<dbReference type="GO" id="GO:0008948">
    <property type="term" value="F:oxaloacetate decarboxylase activity"/>
    <property type="evidence" value="ECO:0007669"/>
    <property type="project" value="UniProtKB-UniRule"/>
</dbReference>
<dbReference type="GO" id="GO:0006108">
    <property type="term" value="P:malate metabolic process"/>
    <property type="evidence" value="ECO:0007669"/>
    <property type="project" value="TreeGrafter"/>
</dbReference>
<dbReference type="CDD" id="cd05312">
    <property type="entry name" value="NAD_bind_1_malic_enz"/>
    <property type="match status" value="1"/>
</dbReference>
<dbReference type="FunFam" id="3.40.50.10380:FF:000001">
    <property type="entry name" value="NAD-dependent malic enzyme"/>
    <property type="match status" value="1"/>
</dbReference>
<dbReference type="FunFam" id="3.40.50.720:FF:000055">
    <property type="entry name" value="NAD-dependent malic enzyme"/>
    <property type="match status" value="1"/>
</dbReference>
<dbReference type="Gene3D" id="3.40.50.10380">
    <property type="entry name" value="Malic enzyme, N-terminal domain"/>
    <property type="match status" value="1"/>
</dbReference>
<dbReference type="Gene3D" id="3.40.50.720">
    <property type="entry name" value="NAD(P)-binding Rossmann-like Domain"/>
    <property type="match status" value="1"/>
</dbReference>
<dbReference type="HAMAP" id="MF_01619">
    <property type="entry name" value="NAD_malic_enz"/>
    <property type="match status" value="1"/>
</dbReference>
<dbReference type="InterPro" id="IPR046346">
    <property type="entry name" value="Aminoacid_DH-like_N_sf"/>
</dbReference>
<dbReference type="InterPro" id="IPR015884">
    <property type="entry name" value="Malic_enzyme_CS"/>
</dbReference>
<dbReference type="InterPro" id="IPR012301">
    <property type="entry name" value="Malic_N_dom"/>
</dbReference>
<dbReference type="InterPro" id="IPR037062">
    <property type="entry name" value="Malic_N_dom_sf"/>
</dbReference>
<dbReference type="InterPro" id="IPR012302">
    <property type="entry name" value="Malic_NAD-bd"/>
</dbReference>
<dbReference type="InterPro" id="IPR001891">
    <property type="entry name" value="Malic_OxRdtase"/>
</dbReference>
<dbReference type="InterPro" id="IPR036291">
    <property type="entry name" value="NAD(P)-bd_dom_sf"/>
</dbReference>
<dbReference type="InterPro" id="IPR023667">
    <property type="entry name" value="NAD_malic_enz_proteobac"/>
</dbReference>
<dbReference type="NCBIfam" id="NF010052">
    <property type="entry name" value="PRK13529.1"/>
    <property type="match status" value="1"/>
</dbReference>
<dbReference type="PANTHER" id="PTHR23406">
    <property type="entry name" value="MALIC ENZYME-RELATED"/>
    <property type="match status" value="1"/>
</dbReference>
<dbReference type="PANTHER" id="PTHR23406:SF34">
    <property type="entry name" value="NAD-DEPENDENT MALIC ENZYME, MITOCHONDRIAL"/>
    <property type="match status" value="1"/>
</dbReference>
<dbReference type="Pfam" id="PF00390">
    <property type="entry name" value="malic"/>
    <property type="match status" value="1"/>
</dbReference>
<dbReference type="Pfam" id="PF03949">
    <property type="entry name" value="Malic_M"/>
    <property type="match status" value="1"/>
</dbReference>
<dbReference type="PIRSF" id="PIRSF000106">
    <property type="entry name" value="ME"/>
    <property type="match status" value="1"/>
</dbReference>
<dbReference type="PRINTS" id="PR00072">
    <property type="entry name" value="MALOXRDTASE"/>
</dbReference>
<dbReference type="SMART" id="SM01274">
    <property type="entry name" value="malic"/>
    <property type="match status" value="1"/>
</dbReference>
<dbReference type="SMART" id="SM00919">
    <property type="entry name" value="Malic_M"/>
    <property type="match status" value="1"/>
</dbReference>
<dbReference type="SUPFAM" id="SSF53223">
    <property type="entry name" value="Aminoacid dehydrogenase-like, N-terminal domain"/>
    <property type="match status" value="1"/>
</dbReference>
<dbReference type="SUPFAM" id="SSF51735">
    <property type="entry name" value="NAD(P)-binding Rossmann-fold domains"/>
    <property type="match status" value="1"/>
</dbReference>
<dbReference type="PROSITE" id="PS00331">
    <property type="entry name" value="MALIC_ENZYMES"/>
    <property type="match status" value="1"/>
</dbReference>